<sequence>MSVLQVLHIPDERLRKVAKPVEEVNAEIQRIVDDMFETMYAEEGIGLAATQVDIHQRIIVIDVSENRDERLVLINPELLEKSGETGIEEGCLSIPEQRALVPRAEKVKIRALDRDGNPFELEADGLLAICIQHEMDHLVGKLFIDYLSPLKQQRIRQKVEKLDRLNARA</sequence>
<dbReference type="EC" id="3.5.1.88" evidence="1"/>
<dbReference type="EMBL" id="FM200053">
    <property type="protein sequence ID" value="CAR61303.1"/>
    <property type="molecule type" value="Genomic_DNA"/>
</dbReference>
<dbReference type="RefSeq" id="WP_000114987.1">
    <property type="nucleotide sequence ID" value="NC_011147.1"/>
</dbReference>
<dbReference type="SMR" id="B5BGV3"/>
<dbReference type="KEGG" id="sek:SSPA3052"/>
<dbReference type="HOGENOM" id="CLU_061901_2_1_6"/>
<dbReference type="Proteomes" id="UP000001869">
    <property type="component" value="Chromosome"/>
</dbReference>
<dbReference type="GO" id="GO:0046872">
    <property type="term" value="F:metal ion binding"/>
    <property type="evidence" value="ECO:0007669"/>
    <property type="project" value="UniProtKB-KW"/>
</dbReference>
<dbReference type="GO" id="GO:0042586">
    <property type="term" value="F:peptide deformylase activity"/>
    <property type="evidence" value="ECO:0007669"/>
    <property type="project" value="UniProtKB-UniRule"/>
</dbReference>
<dbReference type="GO" id="GO:0043686">
    <property type="term" value="P:co-translational protein modification"/>
    <property type="evidence" value="ECO:0007669"/>
    <property type="project" value="TreeGrafter"/>
</dbReference>
<dbReference type="GO" id="GO:0006412">
    <property type="term" value="P:translation"/>
    <property type="evidence" value="ECO:0007669"/>
    <property type="project" value="UniProtKB-UniRule"/>
</dbReference>
<dbReference type="CDD" id="cd00487">
    <property type="entry name" value="Pep_deformylase"/>
    <property type="match status" value="1"/>
</dbReference>
<dbReference type="FunFam" id="3.90.45.10:FF:000001">
    <property type="entry name" value="Peptide deformylase"/>
    <property type="match status" value="1"/>
</dbReference>
<dbReference type="Gene3D" id="3.90.45.10">
    <property type="entry name" value="Peptide deformylase"/>
    <property type="match status" value="1"/>
</dbReference>
<dbReference type="HAMAP" id="MF_00163">
    <property type="entry name" value="Pep_deformylase"/>
    <property type="match status" value="1"/>
</dbReference>
<dbReference type="InterPro" id="IPR023635">
    <property type="entry name" value="Peptide_deformylase"/>
</dbReference>
<dbReference type="InterPro" id="IPR036821">
    <property type="entry name" value="Peptide_deformylase_sf"/>
</dbReference>
<dbReference type="NCBIfam" id="TIGR00079">
    <property type="entry name" value="pept_deformyl"/>
    <property type="match status" value="1"/>
</dbReference>
<dbReference type="NCBIfam" id="NF001159">
    <property type="entry name" value="PRK00150.1-3"/>
    <property type="match status" value="1"/>
</dbReference>
<dbReference type="PANTHER" id="PTHR10458">
    <property type="entry name" value="PEPTIDE DEFORMYLASE"/>
    <property type="match status" value="1"/>
</dbReference>
<dbReference type="PANTHER" id="PTHR10458:SF21">
    <property type="entry name" value="PEPTIDE DEFORMYLASE"/>
    <property type="match status" value="1"/>
</dbReference>
<dbReference type="Pfam" id="PF01327">
    <property type="entry name" value="Pep_deformylase"/>
    <property type="match status" value="1"/>
</dbReference>
<dbReference type="PIRSF" id="PIRSF004749">
    <property type="entry name" value="Pep_def"/>
    <property type="match status" value="1"/>
</dbReference>
<dbReference type="PRINTS" id="PR01576">
    <property type="entry name" value="PDEFORMYLASE"/>
</dbReference>
<dbReference type="SUPFAM" id="SSF56420">
    <property type="entry name" value="Peptide deformylase"/>
    <property type="match status" value="1"/>
</dbReference>
<evidence type="ECO:0000255" key="1">
    <source>
        <dbReference type="HAMAP-Rule" id="MF_00163"/>
    </source>
</evidence>
<protein>
    <recommendedName>
        <fullName evidence="1">Peptide deformylase</fullName>
        <shortName evidence="1">PDF</shortName>
        <ecNumber evidence="1">3.5.1.88</ecNumber>
    </recommendedName>
    <alternativeName>
        <fullName evidence="1">Polypeptide deformylase</fullName>
    </alternativeName>
</protein>
<reference key="1">
    <citation type="journal article" date="2009" name="BMC Genomics">
        <title>Pseudogene accumulation in the evolutionary histories of Salmonella enterica serovars Paratyphi A and Typhi.</title>
        <authorList>
            <person name="Holt K.E."/>
            <person name="Thomson N.R."/>
            <person name="Wain J."/>
            <person name="Langridge G.C."/>
            <person name="Hasan R."/>
            <person name="Bhutta Z.A."/>
            <person name="Quail M.A."/>
            <person name="Norbertczak H."/>
            <person name="Walker D."/>
            <person name="Simmonds M."/>
            <person name="White B."/>
            <person name="Bason N."/>
            <person name="Mungall K."/>
            <person name="Dougan G."/>
            <person name="Parkhill J."/>
        </authorList>
    </citation>
    <scope>NUCLEOTIDE SEQUENCE [LARGE SCALE GENOMIC DNA]</scope>
    <source>
        <strain>AKU_12601</strain>
    </source>
</reference>
<name>DEF_SALPK</name>
<feature type="chain" id="PRO_1000097342" description="Peptide deformylase">
    <location>
        <begin position="1"/>
        <end position="169"/>
    </location>
</feature>
<feature type="active site" evidence="1">
    <location>
        <position position="134"/>
    </location>
</feature>
<feature type="binding site" evidence="1">
    <location>
        <position position="91"/>
    </location>
    <ligand>
        <name>Fe cation</name>
        <dbReference type="ChEBI" id="CHEBI:24875"/>
    </ligand>
</feature>
<feature type="binding site" evidence="1">
    <location>
        <position position="133"/>
    </location>
    <ligand>
        <name>Fe cation</name>
        <dbReference type="ChEBI" id="CHEBI:24875"/>
    </ligand>
</feature>
<feature type="binding site" evidence="1">
    <location>
        <position position="137"/>
    </location>
    <ligand>
        <name>Fe cation</name>
        <dbReference type="ChEBI" id="CHEBI:24875"/>
    </ligand>
</feature>
<keyword id="KW-0378">Hydrolase</keyword>
<keyword id="KW-0408">Iron</keyword>
<keyword id="KW-0479">Metal-binding</keyword>
<keyword id="KW-0648">Protein biosynthesis</keyword>
<gene>
    <name evidence="1" type="primary">def</name>
    <name type="ordered locus">SSPA3052</name>
</gene>
<organism>
    <name type="scientific">Salmonella paratyphi A (strain AKU_12601)</name>
    <dbReference type="NCBI Taxonomy" id="554290"/>
    <lineage>
        <taxon>Bacteria</taxon>
        <taxon>Pseudomonadati</taxon>
        <taxon>Pseudomonadota</taxon>
        <taxon>Gammaproteobacteria</taxon>
        <taxon>Enterobacterales</taxon>
        <taxon>Enterobacteriaceae</taxon>
        <taxon>Salmonella</taxon>
    </lineage>
</organism>
<accession>B5BGV3</accession>
<proteinExistence type="inferred from homology"/>
<comment type="function">
    <text evidence="1">Removes the formyl group from the N-terminal Met of newly synthesized proteins. Requires at least a dipeptide for an efficient rate of reaction. N-terminal L-methionine is a prerequisite for activity but the enzyme has broad specificity at other positions.</text>
</comment>
<comment type="catalytic activity">
    <reaction evidence="1">
        <text>N-terminal N-formyl-L-methionyl-[peptide] + H2O = N-terminal L-methionyl-[peptide] + formate</text>
        <dbReference type="Rhea" id="RHEA:24420"/>
        <dbReference type="Rhea" id="RHEA-COMP:10639"/>
        <dbReference type="Rhea" id="RHEA-COMP:10640"/>
        <dbReference type="ChEBI" id="CHEBI:15377"/>
        <dbReference type="ChEBI" id="CHEBI:15740"/>
        <dbReference type="ChEBI" id="CHEBI:49298"/>
        <dbReference type="ChEBI" id="CHEBI:64731"/>
        <dbReference type="EC" id="3.5.1.88"/>
    </reaction>
</comment>
<comment type="cofactor">
    <cofactor evidence="1">
        <name>Fe(2+)</name>
        <dbReference type="ChEBI" id="CHEBI:29033"/>
    </cofactor>
    <text evidence="1">Binds 1 Fe(2+) ion.</text>
</comment>
<comment type="similarity">
    <text evidence="1">Belongs to the polypeptide deformylase family.</text>
</comment>